<reference key="1">
    <citation type="journal article" date="2004" name="Proc. Natl. Acad. Sci. U.S.A.">
        <title>Complete genomes of two clinical Staphylococcus aureus strains: evidence for the rapid evolution of virulence and drug resistance.</title>
        <authorList>
            <person name="Holden M.T.G."/>
            <person name="Feil E.J."/>
            <person name="Lindsay J.A."/>
            <person name="Peacock S.J."/>
            <person name="Day N.P.J."/>
            <person name="Enright M.C."/>
            <person name="Foster T.J."/>
            <person name="Moore C.E."/>
            <person name="Hurst L."/>
            <person name="Atkin R."/>
            <person name="Barron A."/>
            <person name="Bason N."/>
            <person name="Bentley S.D."/>
            <person name="Chillingworth C."/>
            <person name="Chillingworth T."/>
            <person name="Churcher C."/>
            <person name="Clark L."/>
            <person name="Corton C."/>
            <person name="Cronin A."/>
            <person name="Doggett J."/>
            <person name="Dowd L."/>
            <person name="Feltwell T."/>
            <person name="Hance Z."/>
            <person name="Harris B."/>
            <person name="Hauser H."/>
            <person name="Holroyd S."/>
            <person name="Jagels K."/>
            <person name="James K.D."/>
            <person name="Lennard N."/>
            <person name="Line A."/>
            <person name="Mayes R."/>
            <person name="Moule S."/>
            <person name="Mungall K."/>
            <person name="Ormond D."/>
            <person name="Quail M.A."/>
            <person name="Rabbinowitsch E."/>
            <person name="Rutherford K.M."/>
            <person name="Sanders M."/>
            <person name="Sharp S."/>
            <person name="Simmonds M."/>
            <person name="Stevens K."/>
            <person name="Whitehead S."/>
            <person name="Barrell B.G."/>
            <person name="Spratt B.G."/>
            <person name="Parkhill J."/>
        </authorList>
    </citation>
    <scope>NUCLEOTIDE SEQUENCE [LARGE SCALE GENOMIC DNA]</scope>
    <source>
        <strain>MRSA252</strain>
    </source>
</reference>
<sequence length="451" mass="49294">MGKYFGTDGVRGVANQELTPELAFKLGRYGGYVLAHNKGEKHPRVLVGRDTRVSGEMLESALIAGLISIGAEVMRLGIISTPGVAYLTRDMGAELGVMISASHNPVADNGIKFFGSDGFKLSDEQENEIEALLDQENPELPRPVGNDIVHYSDYFEGAQKYLSYLKSTVDVNFEGLKIVLDGANGSTSSLAPFLFGDLEADTETIGCSPDGYNINEKCGSTHPEKLAEKVVETESDFGLAFDGDGDRIIAVDENGQIVDGDQIMFIIGQEMHKNQELNNDMIVSTVMSNLGFYKALEQEGIKSNKTKVGDRYVVEEMRRGNYNLGGEQSGHIVMMDYNTTGDGLLTGIQLASVIKMTGKSLSELAGQMKKYPQSLINVRVTDKYRVEENVDVKEVMTKVEVEMNGEGRILVRPSGTEPLVRVMVEAATDEDAERFAQQIADVVQDKMGLDK</sequence>
<dbReference type="EC" id="5.4.2.10" evidence="1"/>
<dbReference type="EMBL" id="BX571856">
    <property type="protein sequence ID" value="CAG41231.1"/>
    <property type="molecule type" value="Genomic_DNA"/>
</dbReference>
<dbReference type="RefSeq" id="WP_000521495.1">
    <property type="nucleotide sequence ID" value="NC_002952.2"/>
</dbReference>
<dbReference type="SMR" id="Q6GER6"/>
<dbReference type="KEGG" id="sar:SAR2252"/>
<dbReference type="HOGENOM" id="CLU_016950_7_0_9"/>
<dbReference type="Proteomes" id="UP000000596">
    <property type="component" value="Chromosome"/>
</dbReference>
<dbReference type="GO" id="GO:0005829">
    <property type="term" value="C:cytosol"/>
    <property type="evidence" value="ECO:0007669"/>
    <property type="project" value="TreeGrafter"/>
</dbReference>
<dbReference type="GO" id="GO:0000287">
    <property type="term" value="F:magnesium ion binding"/>
    <property type="evidence" value="ECO:0007669"/>
    <property type="project" value="UniProtKB-UniRule"/>
</dbReference>
<dbReference type="GO" id="GO:0008966">
    <property type="term" value="F:phosphoglucosamine mutase activity"/>
    <property type="evidence" value="ECO:0007669"/>
    <property type="project" value="UniProtKB-UniRule"/>
</dbReference>
<dbReference type="GO" id="GO:0004615">
    <property type="term" value="F:phosphomannomutase activity"/>
    <property type="evidence" value="ECO:0007669"/>
    <property type="project" value="TreeGrafter"/>
</dbReference>
<dbReference type="GO" id="GO:0005975">
    <property type="term" value="P:carbohydrate metabolic process"/>
    <property type="evidence" value="ECO:0007669"/>
    <property type="project" value="InterPro"/>
</dbReference>
<dbReference type="GO" id="GO:0009252">
    <property type="term" value="P:peptidoglycan biosynthetic process"/>
    <property type="evidence" value="ECO:0007669"/>
    <property type="project" value="TreeGrafter"/>
</dbReference>
<dbReference type="GO" id="GO:0006048">
    <property type="term" value="P:UDP-N-acetylglucosamine biosynthetic process"/>
    <property type="evidence" value="ECO:0007669"/>
    <property type="project" value="TreeGrafter"/>
</dbReference>
<dbReference type="CDD" id="cd05802">
    <property type="entry name" value="GlmM"/>
    <property type="match status" value="1"/>
</dbReference>
<dbReference type="FunFam" id="3.30.310.50:FF:000001">
    <property type="entry name" value="Phosphoglucosamine mutase"/>
    <property type="match status" value="1"/>
</dbReference>
<dbReference type="FunFam" id="3.40.120.10:FF:000001">
    <property type="entry name" value="Phosphoglucosamine mutase"/>
    <property type="match status" value="1"/>
</dbReference>
<dbReference type="FunFam" id="3.40.120.10:FF:000002">
    <property type="entry name" value="Phosphoglucosamine mutase"/>
    <property type="match status" value="1"/>
</dbReference>
<dbReference type="Gene3D" id="3.40.120.10">
    <property type="entry name" value="Alpha-D-Glucose-1,6-Bisphosphate, subunit A, domain 3"/>
    <property type="match status" value="3"/>
</dbReference>
<dbReference type="Gene3D" id="3.30.310.50">
    <property type="entry name" value="Alpha-D-phosphohexomutase, C-terminal domain"/>
    <property type="match status" value="1"/>
</dbReference>
<dbReference type="HAMAP" id="MF_01554_B">
    <property type="entry name" value="GlmM_B"/>
    <property type="match status" value="1"/>
</dbReference>
<dbReference type="InterPro" id="IPR005844">
    <property type="entry name" value="A-D-PHexomutase_a/b/a-I"/>
</dbReference>
<dbReference type="InterPro" id="IPR016055">
    <property type="entry name" value="A-D-PHexomutase_a/b/a-I/II/III"/>
</dbReference>
<dbReference type="InterPro" id="IPR005845">
    <property type="entry name" value="A-D-PHexomutase_a/b/a-II"/>
</dbReference>
<dbReference type="InterPro" id="IPR005846">
    <property type="entry name" value="A-D-PHexomutase_a/b/a-III"/>
</dbReference>
<dbReference type="InterPro" id="IPR005843">
    <property type="entry name" value="A-D-PHexomutase_C"/>
</dbReference>
<dbReference type="InterPro" id="IPR036900">
    <property type="entry name" value="A-D-PHexomutase_C_sf"/>
</dbReference>
<dbReference type="InterPro" id="IPR016066">
    <property type="entry name" value="A-D-PHexomutase_CS"/>
</dbReference>
<dbReference type="InterPro" id="IPR005841">
    <property type="entry name" value="Alpha-D-phosphohexomutase_SF"/>
</dbReference>
<dbReference type="InterPro" id="IPR006352">
    <property type="entry name" value="GlmM_bact"/>
</dbReference>
<dbReference type="InterPro" id="IPR050060">
    <property type="entry name" value="Phosphoglucosamine_mutase"/>
</dbReference>
<dbReference type="NCBIfam" id="TIGR01455">
    <property type="entry name" value="glmM"/>
    <property type="match status" value="1"/>
</dbReference>
<dbReference type="NCBIfam" id="NF008139">
    <property type="entry name" value="PRK10887.1"/>
    <property type="match status" value="1"/>
</dbReference>
<dbReference type="PANTHER" id="PTHR42946:SF1">
    <property type="entry name" value="PHOSPHOGLUCOMUTASE (ALPHA-D-GLUCOSE-1,6-BISPHOSPHATE-DEPENDENT)"/>
    <property type="match status" value="1"/>
</dbReference>
<dbReference type="PANTHER" id="PTHR42946">
    <property type="entry name" value="PHOSPHOHEXOSE MUTASE"/>
    <property type="match status" value="1"/>
</dbReference>
<dbReference type="Pfam" id="PF02878">
    <property type="entry name" value="PGM_PMM_I"/>
    <property type="match status" value="1"/>
</dbReference>
<dbReference type="Pfam" id="PF02879">
    <property type="entry name" value="PGM_PMM_II"/>
    <property type="match status" value="1"/>
</dbReference>
<dbReference type="Pfam" id="PF02880">
    <property type="entry name" value="PGM_PMM_III"/>
    <property type="match status" value="1"/>
</dbReference>
<dbReference type="Pfam" id="PF00408">
    <property type="entry name" value="PGM_PMM_IV"/>
    <property type="match status" value="1"/>
</dbReference>
<dbReference type="PRINTS" id="PR00509">
    <property type="entry name" value="PGMPMM"/>
</dbReference>
<dbReference type="SUPFAM" id="SSF55957">
    <property type="entry name" value="Phosphoglucomutase, C-terminal domain"/>
    <property type="match status" value="1"/>
</dbReference>
<dbReference type="SUPFAM" id="SSF53738">
    <property type="entry name" value="Phosphoglucomutase, first 3 domains"/>
    <property type="match status" value="3"/>
</dbReference>
<dbReference type="PROSITE" id="PS00710">
    <property type="entry name" value="PGM_PMM"/>
    <property type="match status" value="1"/>
</dbReference>
<keyword id="KW-0413">Isomerase</keyword>
<keyword id="KW-0460">Magnesium</keyword>
<keyword id="KW-0479">Metal-binding</keyword>
<keyword id="KW-0597">Phosphoprotein</keyword>
<gene>
    <name evidence="1" type="primary">glmM</name>
    <name type="synonym">femD</name>
    <name type="ordered locus">SAR2252</name>
</gene>
<comment type="function">
    <text evidence="1">Catalyzes the conversion of glucosamine-6-phosphate to glucosamine-1-phosphate.</text>
</comment>
<comment type="catalytic activity">
    <reaction evidence="1">
        <text>alpha-D-glucosamine 1-phosphate = D-glucosamine 6-phosphate</text>
        <dbReference type="Rhea" id="RHEA:23424"/>
        <dbReference type="ChEBI" id="CHEBI:58516"/>
        <dbReference type="ChEBI" id="CHEBI:58725"/>
        <dbReference type="EC" id="5.4.2.10"/>
    </reaction>
</comment>
<comment type="cofactor">
    <cofactor evidence="1">
        <name>Mg(2+)</name>
        <dbReference type="ChEBI" id="CHEBI:18420"/>
    </cofactor>
    <text evidence="1">Binds 1 Mg(2+) ion per subunit.</text>
</comment>
<comment type="PTM">
    <text evidence="1">Activated by phosphorylation.</text>
</comment>
<comment type="similarity">
    <text evidence="1">Belongs to the phosphohexose mutase family.</text>
</comment>
<protein>
    <recommendedName>
        <fullName evidence="1">Phosphoglucosamine mutase</fullName>
        <ecNumber evidence="1">5.4.2.10</ecNumber>
    </recommendedName>
</protein>
<proteinExistence type="inferred from homology"/>
<feature type="chain" id="PRO_0000147960" description="Phosphoglucosamine mutase">
    <location>
        <begin position="1"/>
        <end position="451"/>
    </location>
</feature>
<feature type="active site" description="Phosphoserine intermediate" evidence="1">
    <location>
        <position position="102"/>
    </location>
</feature>
<feature type="binding site" description="via phosphate group" evidence="1">
    <location>
        <position position="102"/>
    </location>
    <ligand>
        <name>Mg(2+)</name>
        <dbReference type="ChEBI" id="CHEBI:18420"/>
    </ligand>
</feature>
<feature type="binding site" evidence="1">
    <location>
        <position position="242"/>
    </location>
    <ligand>
        <name>Mg(2+)</name>
        <dbReference type="ChEBI" id="CHEBI:18420"/>
    </ligand>
</feature>
<feature type="binding site" evidence="1">
    <location>
        <position position="244"/>
    </location>
    <ligand>
        <name>Mg(2+)</name>
        <dbReference type="ChEBI" id="CHEBI:18420"/>
    </ligand>
</feature>
<feature type="binding site" evidence="1">
    <location>
        <position position="246"/>
    </location>
    <ligand>
        <name>Mg(2+)</name>
        <dbReference type="ChEBI" id="CHEBI:18420"/>
    </ligand>
</feature>
<feature type="modified residue" description="Phosphoserine" evidence="1">
    <location>
        <position position="102"/>
    </location>
</feature>
<name>GLMM_STAAR</name>
<accession>Q6GER6</accession>
<evidence type="ECO:0000255" key="1">
    <source>
        <dbReference type="HAMAP-Rule" id="MF_01554"/>
    </source>
</evidence>
<organism>
    <name type="scientific">Staphylococcus aureus (strain MRSA252)</name>
    <dbReference type="NCBI Taxonomy" id="282458"/>
    <lineage>
        <taxon>Bacteria</taxon>
        <taxon>Bacillati</taxon>
        <taxon>Bacillota</taxon>
        <taxon>Bacilli</taxon>
        <taxon>Bacillales</taxon>
        <taxon>Staphylococcaceae</taxon>
        <taxon>Staphylococcus</taxon>
    </lineage>
</organism>